<accession>Q06151</accession>
<accession>D6VYR7</accession>
<accession>Q6Q5L1</accession>
<proteinExistence type="evidence at protein level"/>
<feature type="initiator methionine" description="Removed" evidence="19">
    <location>
        <position position="1"/>
    </location>
</feature>
<feature type="chain" id="PRO_0000109798" description="m7GpppX diphosphatase">
    <location>
        <begin position="2"/>
        <end position="350"/>
    </location>
</feature>
<feature type="short sequence motif" description="Histidine triad motif" evidence="1">
    <location>
        <begin position="266"/>
        <end position="270"/>
    </location>
</feature>
<feature type="active site" description="Nucleophile" evidence="2">
    <location>
        <position position="268"/>
    </location>
</feature>
<feature type="binding site" evidence="2">
    <location>
        <position position="171"/>
    </location>
    <ligand>
        <name>substrate</name>
    </ligand>
</feature>
<feature type="binding site" evidence="2">
    <location>
        <position position="196"/>
    </location>
    <ligand>
        <name>substrate</name>
    </ligand>
</feature>
<feature type="binding site" evidence="1">
    <location>
        <begin position="259"/>
        <end position="270"/>
    </location>
    <ligand>
        <name>substrate</name>
    </ligand>
</feature>
<feature type="modified residue" description="N-acetylserine" evidence="19">
    <location>
        <position position="2"/>
    </location>
</feature>
<feature type="modified residue" description="Phosphoserine" evidence="17 18">
    <location>
        <position position="60"/>
    </location>
</feature>
<feature type="modified residue" description="Phosphothreonine" evidence="7 18">
    <location>
        <position position="66"/>
    </location>
</feature>
<feature type="modified residue" description="Phosphothreonine; by YAK1" evidence="13 18">
    <location>
        <position position="66"/>
    </location>
</feature>
<feature type="modified residue" description="Phosphotyrosine" evidence="18">
    <location>
        <position position="70"/>
    </location>
</feature>
<feature type="modified residue" description="Phosphothreonine" evidence="18">
    <location>
        <position position="120"/>
    </location>
</feature>
<feature type="mutagenesis site" description="Strongly reduces phosphorylation." evidence="7">
    <original>T</original>
    <variation>A</variation>
    <location>
        <position position="66"/>
    </location>
</feature>
<feature type="mutagenesis site" description="Loss of function." evidence="4">
    <original>H</original>
    <variation>N</variation>
    <location>
        <position position="268"/>
    </location>
</feature>
<feature type="sequence conflict" description="In Ref. 4; AAS56281." evidence="12" ref="4">
    <original>T</original>
    <variation>I</variation>
    <location>
        <position position="66"/>
    </location>
</feature>
<feature type="helix" evidence="20">
    <location>
        <begin position="8"/>
        <end position="14"/>
    </location>
</feature>
<feature type="strand" evidence="20">
    <location>
        <begin position="16"/>
        <end position="24"/>
    </location>
</feature>
<feature type="turn" evidence="20">
    <location>
        <begin position="25"/>
        <end position="28"/>
    </location>
</feature>
<feature type="strand" evidence="20">
    <location>
        <begin position="29"/>
        <end position="36"/>
    </location>
</feature>
<feature type="strand" evidence="20">
    <location>
        <begin position="39"/>
        <end position="47"/>
    </location>
</feature>
<feature type="turn" evidence="20">
    <location>
        <begin position="78"/>
        <end position="81"/>
    </location>
</feature>
<feature type="strand" evidence="20">
    <location>
        <begin position="82"/>
        <end position="91"/>
    </location>
</feature>
<feature type="strand" evidence="20">
    <location>
        <begin position="94"/>
        <end position="101"/>
    </location>
</feature>
<feature type="turn" evidence="20">
    <location>
        <begin position="105"/>
        <end position="107"/>
    </location>
</feature>
<feature type="strand" evidence="20">
    <location>
        <begin position="110"/>
        <end position="118"/>
    </location>
</feature>
<feature type="helix" evidence="20">
    <location>
        <begin position="121"/>
        <end position="127"/>
    </location>
</feature>
<feature type="strand" evidence="20">
    <location>
        <begin position="132"/>
        <end position="137"/>
    </location>
</feature>
<feature type="helix" evidence="20">
    <location>
        <begin position="139"/>
        <end position="153"/>
    </location>
</feature>
<feature type="turn" evidence="21">
    <location>
        <begin position="156"/>
        <end position="159"/>
    </location>
</feature>
<feature type="helix" evidence="20">
    <location>
        <begin position="160"/>
        <end position="167"/>
    </location>
</feature>
<feature type="helix" evidence="20">
    <location>
        <begin position="172"/>
        <end position="174"/>
    </location>
</feature>
<feature type="strand" evidence="20">
    <location>
        <begin position="177"/>
        <end position="179"/>
    </location>
</feature>
<feature type="strand" evidence="20">
    <location>
        <begin position="189"/>
        <end position="193"/>
    </location>
</feature>
<feature type="helix" evidence="20">
    <location>
        <begin position="202"/>
        <end position="204"/>
    </location>
</feature>
<feature type="strand" evidence="20">
    <location>
        <begin position="206"/>
        <end position="212"/>
    </location>
</feature>
<feature type="helix" evidence="20">
    <location>
        <begin position="219"/>
        <end position="221"/>
    </location>
</feature>
<feature type="helix" evidence="20">
    <location>
        <begin position="224"/>
        <end position="226"/>
    </location>
</feature>
<feature type="helix" evidence="20">
    <location>
        <begin position="227"/>
        <end position="244"/>
    </location>
</feature>
<feature type="turn" evidence="20">
    <location>
        <begin position="245"/>
        <end position="247"/>
    </location>
</feature>
<feature type="helix" evidence="20">
    <location>
        <begin position="251"/>
        <end position="253"/>
    </location>
</feature>
<feature type="strand" evidence="20">
    <location>
        <begin position="254"/>
        <end position="261"/>
    </location>
</feature>
<feature type="strand" evidence="20">
    <location>
        <begin position="263"/>
        <end position="266"/>
    </location>
</feature>
<feature type="strand" evidence="20">
    <location>
        <begin position="268"/>
        <end position="273"/>
    </location>
</feature>
<feature type="turn" evidence="20">
    <location>
        <begin position="280"/>
        <end position="283"/>
    </location>
</feature>
<feature type="turn" evidence="20">
    <location>
        <begin position="285"/>
        <end position="287"/>
    </location>
</feature>
<feature type="strand" evidence="20">
    <location>
        <begin position="288"/>
        <end position="290"/>
    </location>
</feature>
<feature type="helix" evidence="20">
    <location>
        <begin position="291"/>
        <end position="297"/>
    </location>
</feature>
<feature type="turn" evidence="20">
    <location>
        <begin position="298"/>
        <end position="300"/>
    </location>
</feature>
<feature type="helix" evidence="20">
    <location>
        <begin position="305"/>
        <end position="308"/>
    </location>
</feature>
<feature type="strand" evidence="20">
    <location>
        <begin position="311"/>
        <end position="316"/>
    </location>
</feature>
<feature type="helix" evidence="20">
    <location>
        <begin position="320"/>
        <end position="323"/>
    </location>
</feature>
<feature type="helix" evidence="20">
    <location>
        <begin position="326"/>
        <end position="336"/>
    </location>
</feature>
<organism>
    <name type="scientific">Saccharomyces cerevisiae (strain ATCC 204508 / S288c)</name>
    <name type="common">Baker's yeast</name>
    <dbReference type="NCBI Taxonomy" id="559292"/>
    <lineage>
        <taxon>Eukaryota</taxon>
        <taxon>Fungi</taxon>
        <taxon>Dikarya</taxon>
        <taxon>Ascomycota</taxon>
        <taxon>Saccharomycotina</taxon>
        <taxon>Saccharomycetes</taxon>
        <taxon>Saccharomycetales</taxon>
        <taxon>Saccharomycetaceae</taxon>
        <taxon>Saccharomyces</taxon>
    </lineage>
</organism>
<reference evidence="12 15" key="1">
    <citation type="journal article" date="2002" name="EMBO J.">
        <title>The scavenger mRNA decapping enzyme DcpS is a member of the HIT family of pyrophosphatases.</title>
        <authorList>
            <person name="Liu H."/>
            <person name="Rodgers N.D."/>
            <person name="Jiao X."/>
            <person name="Kiledjian M."/>
        </authorList>
    </citation>
    <scope>NUCLEOTIDE SEQUENCE [MRNA]</scope>
    <scope>FUNCTION</scope>
    <scope>MUTAGENESIS OF HIS-268</scope>
</reference>
<reference evidence="12 14" key="2">
    <citation type="journal article" date="1997" name="Nature">
        <title>The nucleotide sequence of Saccharomyces cerevisiae chromosome XII.</title>
        <authorList>
            <person name="Johnston M."/>
            <person name="Hillier L.W."/>
            <person name="Riles L."/>
            <person name="Albermann K."/>
            <person name="Andre B."/>
            <person name="Ansorge W."/>
            <person name="Benes V."/>
            <person name="Brueckner M."/>
            <person name="Delius H."/>
            <person name="Dubois E."/>
            <person name="Duesterhoeft A."/>
            <person name="Entian K.-D."/>
            <person name="Floeth M."/>
            <person name="Goffeau A."/>
            <person name="Hebling U."/>
            <person name="Heumann K."/>
            <person name="Heuss-Neitzel D."/>
            <person name="Hilbert H."/>
            <person name="Hilger F."/>
            <person name="Kleine K."/>
            <person name="Koetter P."/>
            <person name="Louis E.J."/>
            <person name="Messenguy F."/>
            <person name="Mewes H.-W."/>
            <person name="Miosga T."/>
            <person name="Moestl D."/>
            <person name="Mueller-Auer S."/>
            <person name="Nentwich U."/>
            <person name="Obermaier B."/>
            <person name="Piravandi E."/>
            <person name="Pohl T.M."/>
            <person name="Portetelle D."/>
            <person name="Purnelle B."/>
            <person name="Rechmann S."/>
            <person name="Rieger M."/>
            <person name="Rinke M."/>
            <person name="Rose M."/>
            <person name="Scharfe M."/>
            <person name="Scherens B."/>
            <person name="Scholler P."/>
            <person name="Schwager C."/>
            <person name="Schwarz S."/>
            <person name="Underwood A.P."/>
            <person name="Urrestarazu L.A."/>
            <person name="Vandenbol M."/>
            <person name="Verhasselt P."/>
            <person name="Vierendeels F."/>
            <person name="Voet M."/>
            <person name="Volckaert G."/>
            <person name="Voss H."/>
            <person name="Wambutt R."/>
            <person name="Wedler E."/>
            <person name="Wedler H."/>
            <person name="Zimmermann F.K."/>
            <person name="Zollner A."/>
            <person name="Hani J."/>
            <person name="Hoheisel J.D."/>
        </authorList>
    </citation>
    <scope>NUCLEOTIDE SEQUENCE [LARGE SCALE GENOMIC DNA]</scope>
    <source>
        <strain>ATCC 204508 / S288c</strain>
    </source>
</reference>
<reference key="3">
    <citation type="journal article" date="2014" name="G3 (Bethesda)">
        <title>The reference genome sequence of Saccharomyces cerevisiae: Then and now.</title>
        <authorList>
            <person name="Engel S.R."/>
            <person name="Dietrich F.S."/>
            <person name="Fisk D.G."/>
            <person name="Binkley G."/>
            <person name="Balakrishnan R."/>
            <person name="Costanzo M.C."/>
            <person name="Dwight S.S."/>
            <person name="Hitz B.C."/>
            <person name="Karra K."/>
            <person name="Nash R.S."/>
            <person name="Weng S."/>
            <person name="Wong E.D."/>
            <person name="Lloyd P."/>
            <person name="Skrzypek M.S."/>
            <person name="Miyasato S.R."/>
            <person name="Simison M."/>
            <person name="Cherry J.M."/>
        </authorList>
    </citation>
    <scope>GENOME REANNOTATION</scope>
    <source>
        <strain>ATCC 204508 / S288c</strain>
    </source>
</reference>
<reference key="4">
    <citation type="journal article" date="2007" name="Genome Res.">
        <title>Approaching a complete repository of sequence-verified protein-encoding clones for Saccharomyces cerevisiae.</title>
        <authorList>
            <person name="Hu Y."/>
            <person name="Rolfs A."/>
            <person name="Bhullar B."/>
            <person name="Murthy T.V.S."/>
            <person name="Zhu C."/>
            <person name="Berger M.F."/>
            <person name="Camargo A.A."/>
            <person name="Kelley F."/>
            <person name="McCarron S."/>
            <person name="Jepson D."/>
            <person name="Richardson A."/>
            <person name="Raphael J."/>
            <person name="Moreira D."/>
            <person name="Taycher E."/>
            <person name="Zuo D."/>
            <person name="Mohr S."/>
            <person name="Kane M.F."/>
            <person name="Williamson J."/>
            <person name="Simpson A.J.G."/>
            <person name="Bulyk M.L."/>
            <person name="Harlow E."/>
            <person name="Marsischky G."/>
            <person name="Kolodner R.D."/>
            <person name="LaBaer J."/>
        </authorList>
    </citation>
    <scope>NUCLEOTIDE SEQUENCE [GENOMIC DNA]</scope>
    <source>
        <strain>ATCC 204508 / S288c</strain>
    </source>
</reference>
<reference key="5">
    <citation type="journal article" date="2003" name="Nature">
        <title>Global analysis of protein localization in budding yeast.</title>
        <authorList>
            <person name="Huh W.-K."/>
            <person name="Falvo J.V."/>
            <person name="Gerke L.C."/>
            <person name="Carroll A.S."/>
            <person name="Howson R.W."/>
            <person name="Weissman J.S."/>
            <person name="O'Shea E.K."/>
        </authorList>
    </citation>
    <scope>SUBCELLULAR LOCATION [LARGE SCALE ANALYSIS]</scope>
</reference>
<reference key="6">
    <citation type="journal article" date="2003" name="Nature">
        <title>Global analysis of protein expression in yeast.</title>
        <authorList>
            <person name="Ghaemmaghami S."/>
            <person name="Huh W.-K."/>
            <person name="Bower K."/>
            <person name="Howson R.W."/>
            <person name="Belle A."/>
            <person name="Dephoure N."/>
            <person name="O'Shea E.K."/>
            <person name="Weissman J.S."/>
        </authorList>
    </citation>
    <scope>LEVEL OF PROTEIN EXPRESSION [LARGE SCALE ANALYSIS]</scope>
</reference>
<reference key="7">
    <citation type="journal article" date="2003" name="Proc. Natl. Acad. Sci. U.S.A.">
        <title>DcpS can act in the 5'-3' mRNA decay pathway in addition to the 3'-5' pathway.</title>
        <authorList>
            <person name="van Dijk E."/>
            <person name="Le Hir H."/>
            <person name="Seraphin B."/>
        </authorList>
    </citation>
    <scope>FUNCTION</scope>
</reference>
<reference evidence="12" key="8">
    <citation type="journal article" date="2004" name="Nucleic Acids Res.">
        <title>The 'scavenger' m7GpppX pyrophosphatase activity of Dcs1 modulates nutrient-induced responses in yeast.</title>
        <authorList>
            <person name="Malys N."/>
            <person name="Carroll K."/>
            <person name="Miyan J."/>
            <person name="Tollervey D."/>
            <person name="McCarthy J.E.G."/>
        </authorList>
    </citation>
    <scope>FUNCTION</scope>
    <scope>SUBUNIT</scope>
    <scope>PHOSPHORYLATION AT THR-66</scope>
    <scope>SUBCELLULAR LOCATION</scope>
    <scope>INDUCTION</scope>
    <scope>MUTAGENESIS OF THR-66</scope>
</reference>
<reference key="9">
    <citation type="journal article" date="2004" name="RNA">
        <title>Functional analysis of mRNA scavenger decapping enzymes.</title>
        <authorList>
            <person name="Liu S.-W."/>
            <person name="Jiao X."/>
            <person name="Liu H."/>
            <person name="Gu M."/>
            <person name="Lima C.D."/>
            <person name="Kiledjian M."/>
        </authorList>
    </citation>
    <scope>FUNCTION</scope>
    <scope>CATALYTIC ACTIVITY</scope>
    <scope>DOMAIN</scope>
</reference>
<reference key="10">
    <citation type="journal article" date="2005" name="Mol. Biol. Cell">
        <title>Caenorhabditis elegans decapping proteins: localization and functional analysis of Dcp1, Dcp2, and DcpS during embryogenesis.</title>
        <authorList>
            <person name="Lall S."/>
            <person name="Piano F."/>
            <person name="Davis R.E."/>
        </authorList>
    </citation>
    <scope>SUBCELLULAR LOCATION</scope>
</reference>
<reference key="11">
    <citation type="journal article" date="2005" name="Mol. Cell. Biol.">
        <title>Scavenger decapping activity facilitates 5' to 3' mRNA decay.</title>
        <authorList>
            <person name="Liu H."/>
            <person name="Kiledjian M."/>
        </authorList>
    </citation>
    <scope>FUNCTION</scope>
</reference>
<reference key="12">
    <citation type="journal article" date="2006" name="J. Mol. Biol.">
        <title>Dcs2, a novel stress-induced modulator of m7GpppX pyrophosphatase activity that locates to P bodies.</title>
        <authorList>
            <person name="Malys N."/>
            <person name="McCarthy J.E."/>
        </authorList>
    </citation>
    <scope>FUNCTION</scope>
    <scope>SUBUNIT</scope>
    <scope>BIOPHYSICOCHEMICAL PROPERTIES</scope>
    <scope>SUBCELLULAR LOCATION</scope>
</reference>
<reference key="13">
    <citation type="journal article" date="2007" name="J. Proteome Res.">
        <title>Large-scale phosphorylation analysis of alpha-factor-arrested Saccharomyces cerevisiae.</title>
        <authorList>
            <person name="Li X."/>
            <person name="Gerber S.A."/>
            <person name="Rudner A.D."/>
            <person name="Beausoleil S.A."/>
            <person name="Haas W."/>
            <person name="Villen J."/>
            <person name="Elias J.E."/>
            <person name="Gygi S.P."/>
        </authorList>
    </citation>
    <scope>PHOSPHORYLATION [LARGE SCALE ANALYSIS] AT SER-60</scope>
    <scope>IDENTIFICATION BY MASS SPECTROMETRY [LARGE SCALE ANALYSIS]</scope>
    <source>
        <strain>ADR376</strain>
    </source>
</reference>
<reference key="14">
    <citation type="journal article" date="2008" name="Mol. Cell. Proteomics">
        <title>A multidimensional chromatography technology for in-depth phosphoproteome analysis.</title>
        <authorList>
            <person name="Albuquerque C.P."/>
            <person name="Smolka M.B."/>
            <person name="Payne S.H."/>
            <person name="Bafna V."/>
            <person name="Eng J."/>
            <person name="Zhou H."/>
        </authorList>
    </citation>
    <scope>IDENTIFICATION BY MASS SPECTROMETRY [LARGE SCALE ANALYSIS]</scope>
</reference>
<reference key="15">
    <citation type="journal article" date="2009" name="Science">
        <title>Global analysis of Cdk1 substrate phosphorylation sites provides insights into evolution.</title>
        <authorList>
            <person name="Holt L.J."/>
            <person name="Tuch B.B."/>
            <person name="Villen J."/>
            <person name="Johnson A.D."/>
            <person name="Gygi S.P."/>
            <person name="Morgan D.O."/>
        </authorList>
    </citation>
    <scope>PHOSPHORYLATION [LARGE SCALE ANALYSIS] AT SER-60; THR-66; TYR-70 AND THR-120</scope>
    <scope>IDENTIFICATION BY MASS SPECTROMETRY [LARGE SCALE ANALYSIS]</scope>
</reference>
<reference key="16">
    <citation type="journal article" date="2012" name="Biochemistry">
        <title>7-Methylguanosine diphosphate (m(7)GDP) is not hydrolyzed but strongly bound by decapping scavenger (dcpS) enzymes and potently inhibits their activity.</title>
        <authorList>
            <person name="Wypijewska A."/>
            <person name="Bojarska E."/>
            <person name="Lukaszewicz M."/>
            <person name="Stepinski J."/>
            <person name="Jemielity J."/>
            <person name="Davis R.E."/>
            <person name="Darzynkiewicz E."/>
        </authorList>
    </citation>
    <scope>FUNCTION</scope>
    <scope>CATALYTIC ACTIVITY</scope>
    <scope>SUBSTRATE SPECIFICITY</scope>
    <scope>ACTIVITY REGULATION</scope>
</reference>
<reference key="17">
    <citation type="journal article" date="2012" name="Proc. Natl. Acad. Sci. U.S.A.">
        <title>N-terminal acetylome analyses and functional insights of the N-terminal acetyltransferase NatB.</title>
        <authorList>
            <person name="Van Damme P."/>
            <person name="Lasa M."/>
            <person name="Polevoda B."/>
            <person name="Gazquez C."/>
            <person name="Elosegui-Artola A."/>
            <person name="Kim D.S."/>
            <person name="De Juan-Pardo E."/>
            <person name="Demeyer K."/>
            <person name="Hole K."/>
            <person name="Larrea E."/>
            <person name="Timmerman E."/>
            <person name="Prieto J."/>
            <person name="Arnesen T."/>
            <person name="Sherman F."/>
            <person name="Gevaert K."/>
            <person name="Aldabe R."/>
        </authorList>
    </citation>
    <scope>ACETYLATION [LARGE SCALE ANALYSIS] AT SER-2</scope>
    <scope>CLEAVAGE OF INITIATOR METHIONINE [LARGE SCALE ANALYSIS]</scope>
    <scope>IDENTIFICATION BY MASS SPECTROMETRY [LARGE SCALE ANALYSIS]</scope>
</reference>
<evidence type="ECO:0000250" key="1"/>
<evidence type="ECO:0000250" key="2">
    <source>
        <dbReference type="UniProtKB" id="Q96C86"/>
    </source>
</evidence>
<evidence type="ECO:0000255" key="3"/>
<evidence type="ECO:0000269" key="4">
    <source>
    </source>
</evidence>
<evidence type="ECO:0000269" key="5">
    <source>
    </source>
</evidence>
<evidence type="ECO:0000269" key="6">
    <source>
    </source>
</evidence>
<evidence type="ECO:0000269" key="7">
    <source>
    </source>
</evidence>
<evidence type="ECO:0000269" key="8">
    <source>
    </source>
</evidence>
<evidence type="ECO:0000269" key="9">
    <source>
    </source>
</evidence>
<evidence type="ECO:0000269" key="10">
    <source>
    </source>
</evidence>
<evidence type="ECO:0000269" key="11">
    <source>
    </source>
</evidence>
<evidence type="ECO:0000305" key="12"/>
<evidence type="ECO:0000305" key="13">
    <source>
    </source>
</evidence>
<evidence type="ECO:0000312" key="14">
    <source>
        <dbReference type="EMBL" id="AAB67372.1"/>
    </source>
</evidence>
<evidence type="ECO:0000312" key="15">
    <source>
        <dbReference type="EMBL" id="AAN84614.1"/>
    </source>
</evidence>
<evidence type="ECO:0000312" key="16">
    <source>
        <dbReference type="SGD" id="S000004260"/>
    </source>
</evidence>
<evidence type="ECO:0007744" key="17">
    <source>
    </source>
</evidence>
<evidence type="ECO:0007744" key="18">
    <source>
    </source>
</evidence>
<evidence type="ECO:0007744" key="19">
    <source>
    </source>
</evidence>
<evidence type="ECO:0007829" key="20">
    <source>
        <dbReference type="PDB" id="5BV3"/>
    </source>
</evidence>
<evidence type="ECO:0007829" key="21">
    <source>
        <dbReference type="PDB" id="6TRQ"/>
    </source>
</evidence>
<dbReference type="EC" id="3.6.1.59" evidence="8 11"/>
<dbReference type="EMBL" id="AY165035">
    <property type="protein sequence ID" value="AAN84614.1"/>
    <property type="molecule type" value="mRNA"/>
</dbReference>
<dbReference type="EMBL" id="U17244">
    <property type="protein sequence ID" value="AAB67372.1"/>
    <property type="molecule type" value="Genomic_DNA"/>
</dbReference>
<dbReference type="EMBL" id="AY557955">
    <property type="protein sequence ID" value="AAS56281.1"/>
    <property type="molecule type" value="Genomic_DNA"/>
</dbReference>
<dbReference type="EMBL" id="BK006945">
    <property type="protein sequence ID" value="DAA09583.1"/>
    <property type="molecule type" value="Genomic_DNA"/>
</dbReference>
<dbReference type="PIR" id="S51406">
    <property type="entry name" value="S51406"/>
</dbReference>
<dbReference type="RefSeq" id="NP_013372.1">
    <property type="nucleotide sequence ID" value="NM_001182157.1"/>
</dbReference>
<dbReference type="PDB" id="5BV3">
    <property type="method" value="X-ray"/>
    <property type="resolution" value="2.25 A"/>
    <property type="chains" value="A/B/C/D=8-350"/>
</dbReference>
<dbReference type="PDB" id="6TRQ">
    <property type="method" value="X-ray"/>
    <property type="resolution" value="2.94 A"/>
    <property type="chains" value="A/B/C/D=8-350"/>
</dbReference>
<dbReference type="PDBsum" id="5BV3"/>
<dbReference type="PDBsum" id="6TRQ"/>
<dbReference type="SMR" id="Q06151"/>
<dbReference type="BioGRID" id="31537">
    <property type="interactions" value="97"/>
</dbReference>
<dbReference type="ComplexPortal" id="CPX-1179">
    <property type="entry name" value="DCS1 decapping scavenger complex"/>
</dbReference>
<dbReference type="ComplexPortal" id="CPX-1185">
    <property type="entry name" value="DCS1-DCS2 regulator of decapping scavenger complex"/>
</dbReference>
<dbReference type="DIP" id="DIP-1480N"/>
<dbReference type="FunCoup" id="Q06151">
    <property type="interactions" value="952"/>
</dbReference>
<dbReference type="IntAct" id="Q06151">
    <property type="interactions" value="7"/>
</dbReference>
<dbReference type="MINT" id="Q06151"/>
<dbReference type="STRING" id="4932.YLR270W"/>
<dbReference type="iPTMnet" id="Q06151"/>
<dbReference type="PaxDb" id="4932-YLR270W"/>
<dbReference type="PeptideAtlas" id="Q06151"/>
<dbReference type="EnsemblFungi" id="YLR270W_mRNA">
    <property type="protein sequence ID" value="YLR270W"/>
    <property type="gene ID" value="YLR270W"/>
</dbReference>
<dbReference type="GeneID" id="850974"/>
<dbReference type="KEGG" id="sce:YLR270W"/>
<dbReference type="AGR" id="SGD:S000004260"/>
<dbReference type="SGD" id="S000004260">
    <property type="gene designation" value="DCS1"/>
</dbReference>
<dbReference type="VEuPathDB" id="FungiDB:YLR270W"/>
<dbReference type="eggNOG" id="KOG3969">
    <property type="taxonomic scope" value="Eukaryota"/>
</dbReference>
<dbReference type="GeneTree" id="ENSGT00390000003924"/>
<dbReference type="HOGENOM" id="CLU_041045_0_1_1"/>
<dbReference type="InParanoid" id="Q06151"/>
<dbReference type="OMA" id="RAYFHYQ"/>
<dbReference type="OrthoDB" id="10264956at2759"/>
<dbReference type="BioCyc" id="YEAST:G3O-32369-MONOMER"/>
<dbReference type="BRENDA" id="3.6.1.59">
    <property type="organism ID" value="984"/>
</dbReference>
<dbReference type="Reactome" id="R-SCE-429958">
    <property type="pathway name" value="mRNA decay by 3' to 5' exoribonuclease"/>
</dbReference>
<dbReference type="BioGRID-ORCS" id="850974">
    <property type="hits" value="6 hits in 10 CRISPR screens"/>
</dbReference>
<dbReference type="CD-CODE" id="A777E0F8">
    <property type="entry name" value="P-body"/>
</dbReference>
<dbReference type="EvolutionaryTrace" id="Q06151"/>
<dbReference type="PRO" id="PR:Q06151"/>
<dbReference type="Proteomes" id="UP000002311">
    <property type="component" value="Chromosome XII"/>
</dbReference>
<dbReference type="RNAct" id="Q06151">
    <property type="molecule type" value="protein"/>
</dbReference>
<dbReference type="GO" id="GO:0005737">
    <property type="term" value="C:cytoplasm"/>
    <property type="evidence" value="ECO:0000314"/>
    <property type="project" value="UniProtKB"/>
</dbReference>
<dbReference type="GO" id="GO:0106095">
    <property type="term" value="C:m7G(5')pppN diphosphatase complex"/>
    <property type="evidence" value="ECO:0000353"/>
    <property type="project" value="ComplexPortal"/>
</dbReference>
<dbReference type="GO" id="GO:0005739">
    <property type="term" value="C:mitochondrion"/>
    <property type="evidence" value="ECO:0007005"/>
    <property type="project" value="SGD"/>
</dbReference>
<dbReference type="GO" id="GO:0005634">
    <property type="term" value="C:nucleus"/>
    <property type="evidence" value="ECO:0007005"/>
    <property type="project" value="SGD"/>
</dbReference>
<dbReference type="GO" id="GO:0000932">
    <property type="term" value="C:P-body"/>
    <property type="evidence" value="ECO:0000314"/>
    <property type="project" value="ComplexPortal"/>
</dbReference>
<dbReference type="GO" id="GO:0048471">
    <property type="term" value="C:perinuclear region of cytoplasm"/>
    <property type="evidence" value="ECO:0000314"/>
    <property type="project" value="UniProtKB"/>
</dbReference>
<dbReference type="GO" id="GO:0140932">
    <property type="term" value="F:5'-(N(7)-methyl 5'-triphosphoguanosine)-[mRNA] diphosphatase activity"/>
    <property type="evidence" value="ECO:0007669"/>
    <property type="project" value="UniProtKB-EC"/>
</dbReference>
<dbReference type="GO" id="GO:0044692">
    <property type="term" value="F:exoribonuclease activator activity"/>
    <property type="evidence" value="ECO:0000314"/>
    <property type="project" value="SGD"/>
</dbReference>
<dbReference type="GO" id="GO:0016818">
    <property type="term" value="F:hydrolase activity, acting on acid anhydrides, in phosphorus-containing anhydrides"/>
    <property type="evidence" value="ECO:0000314"/>
    <property type="project" value="SGD"/>
</dbReference>
<dbReference type="GO" id="GO:0042802">
    <property type="term" value="F:identical protein binding"/>
    <property type="evidence" value="ECO:0000353"/>
    <property type="project" value="IntAct"/>
</dbReference>
<dbReference type="GO" id="GO:0046982">
    <property type="term" value="F:protein heterodimerization activity"/>
    <property type="evidence" value="ECO:0000314"/>
    <property type="project" value="UniProtKB"/>
</dbReference>
<dbReference type="GO" id="GO:0042803">
    <property type="term" value="F:protein homodimerization activity"/>
    <property type="evidence" value="ECO:0000314"/>
    <property type="project" value="UniProtKB"/>
</dbReference>
<dbReference type="GO" id="GO:0000340">
    <property type="term" value="F:RNA 7-methylguanosine cap binding"/>
    <property type="evidence" value="ECO:0000314"/>
    <property type="project" value="UniProtKB"/>
</dbReference>
<dbReference type="GO" id="GO:0009267">
    <property type="term" value="P:cellular response to starvation"/>
    <property type="evidence" value="ECO:0000315"/>
    <property type="project" value="SGD"/>
</dbReference>
<dbReference type="GO" id="GO:0000290">
    <property type="term" value="P:deadenylation-dependent decapping of nuclear-transcribed mRNA"/>
    <property type="evidence" value="ECO:0000314"/>
    <property type="project" value="SGD"/>
</dbReference>
<dbReference type="GO" id="GO:0000956">
    <property type="term" value="P:nuclear-transcribed mRNA catabolic process"/>
    <property type="evidence" value="ECO:0000314"/>
    <property type="project" value="ComplexPortal"/>
</dbReference>
<dbReference type="GO" id="GO:0000288">
    <property type="term" value="P:nuclear-transcribed mRNA catabolic process, deadenylation-dependent decay"/>
    <property type="evidence" value="ECO:0000315"/>
    <property type="project" value="UniProtKB"/>
</dbReference>
<dbReference type="GO" id="GO:0031086">
    <property type="term" value="P:nuclear-transcribed mRNA catabolic process, deadenylation-independent decay"/>
    <property type="evidence" value="ECO:0000315"/>
    <property type="project" value="SGD"/>
</dbReference>
<dbReference type="GO" id="GO:0009408">
    <property type="term" value="P:response to heat"/>
    <property type="evidence" value="ECO:0000314"/>
    <property type="project" value="UniProtKB"/>
</dbReference>
<dbReference type="GO" id="GO:0007584">
    <property type="term" value="P:response to nutrient"/>
    <property type="evidence" value="ECO:0000314"/>
    <property type="project" value="UniProtKB"/>
</dbReference>
<dbReference type="GO" id="GO:0006970">
    <property type="term" value="P:response to osmotic stress"/>
    <property type="evidence" value="ECO:0000314"/>
    <property type="project" value="UniProtKB"/>
</dbReference>
<dbReference type="GO" id="GO:0006979">
    <property type="term" value="P:response to oxidative stress"/>
    <property type="evidence" value="ECO:0000314"/>
    <property type="project" value="UniProtKB"/>
</dbReference>
<dbReference type="FunFam" id="3.30.200.40:FF:000002">
    <property type="entry name" value="m7GpppX diphosphatase"/>
    <property type="match status" value="1"/>
</dbReference>
<dbReference type="FunFam" id="3.30.428.10:FF:000015">
    <property type="entry name" value="m7GpppX diphosphatase"/>
    <property type="match status" value="1"/>
</dbReference>
<dbReference type="Gene3D" id="3.30.428.10">
    <property type="entry name" value="HIT-like"/>
    <property type="match status" value="1"/>
</dbReference>
<dbReference type="Gene3D" id="3.30.200.40">
    <property type="entry name" value="Scavenger mRNA decapping enzyme, N-terminal domain"/>
    <property type="match status" value="1"/>
</dbReference>
<dbReference type="InterPro" id="IPR008594">
    <property type="entry name" value="DcpS/DCS2"/>
</dbReference>
<dbReference type="InterPro" id="IPR019808">
    <property type="entry name" value="Histidine_triad_CS"/>
</dbReference>
<dbReference type="InterPro" id="IPR036265">
    <property type="entry name" value="HIT-like_sf"/>
</dbReference>
<dbReference type="InterPro" id="IPR011145">
    <property type="entry name" value="Scavenger_mRNA_decap_enz_N"/>
</dbReference>
<dbReference type="PANTHER" id="PTHR12978">
    <property type="entry name" value="HISTIDINE TRIAD HIT PROTEIN MEMBER"/>
    <property type="match status" value="1"/>
</dbReference>
<dbReference type="PANTHER" id="PTHR12978:SF0">
    <property type="entry name" value="M7GPPPX DIPHOSPHATASE"/>
    <property type="match status" value="1"/>
</dbReference>
<dbReference type="Pfam" id="PF05652">
    <property type="entry name" value="DcpS"/>
    <property type="match status" value="1"/>
</dbReference>
<dbReference type="Pfam" id="PF11969">
    <property type="entry name" value="DcpS_C"/>
    <property type="match status" value="1"/>
</dbReference>
<dbReference type="PIRSF" id="PIRSF028973">
    <property type="entry name" value="Scavenger_mRNA_decap_enz"/>
    <property type="match status" value="1"/>
</dbReference>
<dbReference type="SUPFAM" id="SSF54197">
    <property type="entry name" value="HIT-like"/>
    <property type="match status" value="1"/>
</dbReference>
<dbReference type="SUPFAM" id="SSF102860">
    <property type="entry name" value="mRNA decapping enzyme DcpS N-terminal domain"/>
    <property type="match status" value="1"/>
</dbReference>
<dbReference type="PROSITE" id="PS00892">
    <property type="entry name" value="HIT_1"/>
    <property type="match status" value="1"/>
</dbReference>
<sequence length="350" mass="40770">MSQLPTDFASLIKRFQFVSVLDSNPQTKVMSLLGTIDNKDAIITAEKTHFLFDETVRRPSQDGRSTPVLYNCENEYSCINGIQELKEITSNDIYYWGLSVIKQDMESNPTAKLNLIWPATPIHIKKYEQQNFHLVRETPEMYKRIVQPYIEEMCNNGRLKWVNNILYEGAESERVVYKDFSEENKDDGFLILPDMKWDGMNLDSLYLVAIVYRTDIKTIRDLRYSDRQWLINLNNKIRSIVPGCYNYAVHPDELRILVHYQPSYYHFHIHIVNIKHPGLGNSIAAGKAILLEDIIEMLNYLGPEGYMNKTITYAIGENHDLWKRGLEEELTKQLERDGIPKIPKIVNGFK</sequence>
<keyword id="KW-0002">3D-structure</keyword>
<keyword id="KW-0007">Acetylation</keyword>
<keyword id="KW-0963">Cytoplasm</keyword>
<keyword id="KW-0378">Hydrolase</keyword>
<keyword id="KW-0597">Phosphoprotein</keyword>
<keyword id="KW-1185">Reference proteome</keyword>
<protein>
    <recommendedName>
        <fullName>m7GpppX diphosphatase</fullName>
        <ecNumber evidence="8 11">3.6.1.59</ecNumber>
    </recommendedName>
    <alternativeName>
        <fullName>DCS-1</fullName>
    </alternativeName>
    <alternativeName>
        <fullName>Hint-related 7meGMP-directed hydrolase 1</fullName>
    </alternativeName>
    <alternativeName>
        <fullName>Protein Dcs1p</fullName>
    </alternativeName>
    <alternativeName>
        <fullName>Scavenger mRNA-decapping enzyme DcpS</fullName>
    </alternativeName>
</protein>
<name>DCPS_YEAST</name>
<comment type="function">
    <text evidence="4 5 7 8 9 10 11">Decapping scavenger enzyme that catalyzes the cleavage of a residual cap structure following the degradation of mRNAs by the 3'-&gt;5' exosome-mediated mRNA decay pathway. Hydrolyzes cap analog structures like 7-methylguanosine nucleoside triphosphate (m7GpppG) and tri-methyl guanosine nucleoside triphosphate (m3(2,2,7)GpppG) with up to 10 nucleotide substrates (small capped oligoribonucleotides) and specifically releases 5'-phosphorylated RNA fragments and 7-methylguanosine monophosphate (m7GMP) or tri-methyl guanosine nucleoside monophosphate (m3(2,2,7)GMP), respectively. Does not hydrolyze unmethylated cap analog (GpppG) and shows no decapping activity on intact m7GpppG-capped mRNA molecules longer than 25 nucleotides. Does not hydrolyze 7-methylguanosine diphosphate (m7GDP) and tri-methylguanosine diphosphate (m3(2,2,7)GDP) to (m(7)GMP) and m3(2,2,7)GMP, respectively (PubMed:22985415). May also play a role in the 5'-&gt;3 mRNA decay pathway; m7GDP, the downstream product released by the 5'-&gt;3' mRNA mediated decapping activity, may be also converted by DCS1 to m7GMP (PubMed:14523240). Binds to m7GpppG and strongly to m7GDP. May also regulate the 5'-&gt;3' exoribonucleolytic mRNA decay pathway in a cap-independent manner. Negatively regulates trehalase activity.</text>
</comment>
<comment type="catalytic activity">
    <reaction evidence="8 11">
        <text>a 5'-end (N(7)-methyl 5'-triphosphoguanosine)-ribonucleoside in mRNA + H2O = N(7)-methyl-GMP + a 5'-end diphospho-ribonucleoside in mRNA + 2 H(+)</text>
        <dbReference type="Rhea" id="RHEA:65388"/>
        <dbReference type="Rhea" id="RHEA-COMP:17165"/>
        <dbReference type="Rhea" id="RHEA-COMP:17167"/>
        <dbReference type="ChEBI" id="CHEBI:15377"/>
        <dbReference type="ChEBI" id="CHEBI:15378"/>
        <dbReference type="ChEBI" id="CHEBI:58285"/>
        <dbReference type="ChEBI" id="CHEBI:156461"/>
        <dbReference type="ChEBI" id="CHEBI:167616"/>
        <dbReference type="EC" id="3.6.1.59"/>
    </reaction>
</comment>
<comment type="activity regulation">
    <text evidence="11">The hydrolytic product 7-methylguanosine diphosphate (m7GDP) efficiently inhibits the decapping scavenger activity and acts as a competitive inhibitor in vitro.</text>
</comment>
<comment type="biophysicochemical properties">
    <kinetics>
        <KM evidence="10">0.14 uM for m7GpppG (homodimer)</KM>
        <KM evidence="10">0.26 uM for m7GDP (homodimer)</KM>
        <KM evidence="10">1.01 uM for m7GpppG (heterodimer)</KM>
        <KM evidence="10">0.76 uM for m7GDP (heterodimer)</KM>
        <text>kcat is 0.012 sec(-1) with m7GpppG as substrate (homodimer). kcat is 0.0015 sec(-1) with m7GpppG as substrate (heterodimer). kcat is 0.0017 sec(-1) with m7GDP as substrate (homodimer). kcat is 0.0005 sec(-1) with m7GDP as substrate (heterodimer). The homodimer catalytic efficiency with m7GpppG is at least 8-fold higher than with the heterodimer. The homodimer catalytic efficiency with m7GDP is at least 3.4-fold higher than with the heterodimer.</text>
    </kinetics>
</comment>
<comment type="subunit">
    <text evidence="7 10">Homodimer. Forms heterodimer with DCS2; the interaction inhibits the DCS1 scavenger decapping activity during post-diauxic growth.</text>
</comment>
<comment type="interaction">
    <interactant intactId="EBI-38973">
        <id>Q06151</id>
    </interactant>
    <interactant intactId="EBI-38973">
        <id>Q06151</id>
        <label>DCS1</label>
    </interactant>
    <organismsDiffer>false</organismsDiffer>
    <experiments>4</experiments>
</comment>
<comment type="interaction">
    <interactant intactId="EBI-38973">
        <id>Q06151</id>
    </interactant>
    <interactant intactId="EBI-38701">
        <id>Q12123</id>
        <label>DCS2</label>
    </interactant>
    <organismsDiffer>false</organismsDiffer>
    <experiments>9</experiments>
</comment>
<comment type="interaction">
    <interactant intactId="EBI-38973">
        <id>Q06151</id>
    </interactant>
    <interactant intactId="EBI-19509">
        <id>P32356</id>
        <label>NTH1</label>
    </interactant>
    <organismsDiffer>false</organismsDiffer>
    <experiments>3</experiments>
</comment>
<comment type="subcellular location">
    <subcellularLocation>
        <location>Cytoplasm</location>
    </subcellularLocation>
    <subcellularLocation>
        <location>Cytoplasm</location>
        <location>Perinuclear region</location>
    </subcellularLocation>
    <subcellularLocation>
        <location>Cytoplasm</location>
        <location>P-body</location>
    </subcellularLocation>
    <text>Predominantly cytoplasmic.</text>
</comment>
<comment type="induction">
    <text evidence="7">By nutrient, osmotic, oxidative and heat stress. Up-regulated during the diauxic shift.</text>
</comment>
<comment type="domain">
    <text evidence="8">The C-terminal histidine triad (HIT) motif and the N-terminal domain are required for the decapping activity.</text>
</comment>
<comment type="PTM">
    <text evidence="7">Phosphorylated. Phosphorylation occurs upon glucose deprivation.</text>
</comment>
<comment type="miscellaneous">
    <text evidence="6">Present with 9920 molecules/cell in log phase SD medium.</text>
</comment>
<comment type="similarity">
    <text evidence="3">Belongs to the HIT family.</text>
</comment>
<gene>
    <name evidence="16" type="primary">DCS1</name>
    <name type="ordered locus">YLR270W</name>
</gene>